<reference key="1">
    <citation type="submission" date="2008-02" db="EMBL/GenBank/DDBJ databases">
        <title>Complete sequence of chromosome of Methylobacterium sp. 4-46.</title>
        <authorList>
            <consortium name="US DOE Joint Genome Institute"/>
            <person name="Copeland A."/>
            <person name="Lucas S."/>
            <person name="Lapidus A."/>
            <person name="Glavina del Rio T."/>
            <person name="Dalin E."/>
            <person name="Tice H."/>
            <person name="Bruce D."/>
            <person name="Goodwin L."/>
            <person name="Pitluck S."/>
            <person name="Chertkov O."/>
            <person name="Brettin T."/>
            <person name="Detter J.C."/>
            <person name="Han C."/>
            <person name="Kuske C.R."/>
            <person name="Schmutz J."/>
            <person name="Larimer F."/>
            <person name="Land M."/>
            <person name="Hauser L."/>
            <person name="Kyrpides N."/>
            <person name="Ivanova N."/>
            <person name="Marx C.J."/>
            <person name="Richardson P."/>
        </authorList>
    </citation>
    <scope>NUCLEOTIDE SEQUENCE [LARGE SCALE GENOMIC DNA]</scope>
    <source>
        <strain>4-46</strain>
    </source>
</reference>
<name>NIFW_METS4</name>
<feature type="chain" id="PRO_1000127810" description="Nitrogenase-stabilizing/protective protein NifW">
    <location>
        <begin position="1"/>
        <end position="115"/>
    </location>
</feature>
<evidence type="ECO:0000255" key="1">
    <source>
        <dbReference type="HAMAP-Rule" id="MF_00529"/>
    </source>
</evidence>
<keyword id="KW-0535">Nitrogen fixation</keyword>
<sequence>MSSPCLDRLAALSSAEEFFQVLDLPYAPEVLRVARLHILKRMGQYLATTSFAGLDDDAVRRAARDTLERAYRDFATSTPLAERVFKVLREHDPERPPARGAFVPLADILHPLTQS</sequence>
<proteinExistence type="inferred from homology"/>
<protein>
    <recommendedName>
        <fullName evidence="1">Nitrogenase-stabilizing/protective protein NifW</fullName>
    </recommendedName>
</protein>
<accession>B0UAP4</accession>
<organism>
    <name type="scientific">Methylobacterium sp. (strain 4-46)</name>
    <dbReference type="NCBI Taxonomy" id="426117"/>
    <lineage>
        <taxon>Bacteria</taxon>
        <taxon>Pseudomonadati</taxon>
        <taxon>Pseudomonadota</taxon>
        <taxon>Alphaproteobacteria</taxon>
        <taxon>Hyphomicrobiales</taxon>
        <taxon>Methylobacteriaceae</taxon>
        <taxon>Methylobacterium</taxon>
    </lineage>
</organism>
<comment type="function">
    <text evidence="1">May protect the nitrogenase Fe-Mo protein from oxidative damage.</text>
</comment>
<comment type="subunit">
    <text evidence="1">Homotrimer; associates with NifD.</text>
</comment>
<comment type="similarity">
    <text evidence="1">Belongs to the NifW family.</text>
</comment>
<gene>
    <name evidence="1" type="primary">nifW</name>
    <name type="ordered locus">M446_3578</name>
</gene>
<dbReference type="EMBL" id="CP000943">
    <property type="protein sequence ID" value="ACA17959.1"/>
    <property type="molecule type" value="Genomic_DNA"/>
</dbReference>
<dbReference type="RefSeq" id="WP_012333358.1">
    <property type="nucleotide sequence ID" value="NC_010511.1"/>
</dbReference>
<dbReference type="STRING" id="426117.M446_3578"/>
<dbReference type="KEGG" id="met:M446_3578"/>
<dbReference type="eggNOG" id="ENOG50330W8">
    <property type="taxonomic scope" value="Bacteria"/>
</dbReference>
<dbReference type="HOGENOM" id="CLU_145318_0_0_5"/>
<dbReference type="GO" id="GO:0009399">
    <property type="term" value="P:nitrogen fixation"/>
    <property type="evidence" value="ECO:0007669"/>
    <property type="project" value="UniProtKB-UniRule"/>
</dbReference>
<dbReference type="HAMAP" id="MF_00529">
    <property type="entry name" value="NifW"/>
    <property type="match status" value="1"/>
</dbReference>
<dbReference type="InterPro" id="IPR004893">
    <property type="entry name" value="NifW"/>
</dbReference>
<dbReference type="NCBIfam" id="NF002009">
    <property type="entry name" value="PRK00810.1"/>
    <property type="match status" value="1"/>
</dbReference>
<dbReference type="Pfam" id="PF03206">
    <property type="entry name" value="NifW"/>
    <property type="match status" value="1"/>
</dbReference>
<dbReference type="PIRSF" id="PIRSF005790">
    <property type="entry name" value="NifW"/>
    <property type="match status" value="1"/>
</dbReference>